<name>Y986_THEP1</name>
<proteinExistence type="inferred from homology"/>
<accession>A5ILD1</accession>
<dbReference type="EMBL" id="CP000702">
    <property type="protein sequence ID" value="ABQ47004.1"/>
    <property type="molecule type" value="Genomic_DNA"/>
</dbReference>
<dbReference type="RefSeq" id="WP_004082206.1">
    <property type="nucleotide sequence ID" value="NC_009486.1"/>
</dbReference>
<dbReference type="SMR" id="A5ILD1"/>
<dbReference type="STRING" id="390874.Tpet_0986"/>
<dbReference type="KEGG" id="tpt:Tpet_0986"/>
<dbReference type="eggNOG" id="COG2052">
    <property type="taxonomic scope" value="Bacteria"/>
</dbReference>
<dbReference type="HOGENOM" id="CLU_165326_0_0_0"/>
<dbReference type="Proteomes" id="UP000006558">
    <property type="component" value="Chromosome"/>
</dbReference>
<dbReference type="HAMAP" id="MF_01503">
    <property type="entry name" value="RemA"/>
    <property type="match status" value="1"/>
</dbReference>
<dbReference type="InterPro" id="IPR007169">
    <property type="entry name" value="RemA-like"/>
</dbReference>
<dbReference type="NCBIfam" id="NF003315">
    <property type="entry name" value="PRK04323.1"/>
    <property type="match status" value="1"/>
</dbReference>
<dbReference type="PANTHER" id="PTHR38449:SF1">
    <property type="entry name" value="REGULATORY PROTEIN SSL2874-RELATED"/>
    <property type="match status" value="1"/>
</dbReference>
<dbReference type="PANTHER" id="PTHR38449">
    <property type="entry name" value="REGULATORY PROTEIN TM_1690-RELATED"/>
    <property type="match status" value="1"/>
</dbReference>
<dbReference type="Pfam" id="PF04025">
    <property type="entry name" value="RemA-like"/>
    <property type="match status" value="1"/>
</dbReference>
<evidence type="ECO:0000255" key="1">
    <source>
        <dbReference type="HAMAP-Rule" id="MF_01503"/>
    </source>
</evidence>
<gene>
    <name type="ordered locus">Tpet_0986</name>
</gene>
<reference key="1">
    <citation type="submission" date="2007-05" db="EMBL/GenBank/DDBJ databases">
        <title>Complete sequence of Thermotoga petrophila RKU-1.</title>
        <authorList>
            <consortium name="US DOE Joint Genome Institute"/>
            <person name="Copeland A."/>
            <person name="Lucas S."/>
            <person name="Lapidus A."/>
            <person name="Barry K."/>
            <person name="Glavina del Rio T."/>
            <person name="Dalin E."/>
            <person name="Tice H."/>
            <person name="Pitluck S."/>
            <person name="Sims D."/>
            <person name="Brettin T."/>
            <person name="Bruce D."/>
            <person name="Detter J.C."/>
            <person name="Han C."/>
            <person name="Tapia R."/>
            <person name="Schmutz J."/>
            <person name="Larimer F."/>
            <person name="Land M."/>
            <person name="Hauser L."/>
            <person name="Kyrpides N."/>
            <person name="Mikhailova N."/>
            <person name="Nelson K."/>
            <person name="Gogarten J.P."/>
            <person name="Noll K."/>
            <person name="Richardson P."/>
        </authorList>
    </citation>
    <scope>NUCLEOTIDE SEQUENCE [LARGE SCALE GENOMIC DNA]</scope>
    <source>
        <strain>ATCC BAA-488 / DSM 13995 / JCM 10881 / RKU-1</strain>
    </source>
</reference>
<feature type="chain" id="PRO_1000024480" description="Putative regulatory protein Tpet_0986">
    <location>
        <begin position="1"/>
        <end position="92"/>
    </location>
</feature>
<comment type="similarity">
    <text evidence="1">Belongs to the RemA family.</text>
</comment>
<sequence>MYGLINIGFGNVVAGDRVIAIVNPESSPLKRMKDEAKLEGKLIDATYGRKTRSIIITDSNHIILSAIQPETIAQRFMENFYEIERVLRETKK</sequence>
<organism>
    <name type="scientific">Thermotoga petrophila (strain ATCC BAA-488 / DSM 13995 / JCM 10881 / RKU-1)</name>
    <dbReference type="NCBI Taxonomy" id="390874"/>
    <lineage>
        <taxon>Bacteria</taxon>
        <taxon>Thermotogati</taxon>
        <taxon>Thermotogota</taxon>
        <taxon>Thermotogae</taxon>
        <taxon>Thermotogales</taxon>
        <taxon>Thermotogaceae</taxon>
        <taxon>Thermotoga</taxon>
    </lineage>
</organism>
<protein>
    <recommendedName>
        <fullName evidence="1">Putative regulatory protein Tpet_0986</fullName>
    </recommendedName>
</protein>